<feature type="chain" id="PRO_0000414489" description="Folylpolyglutamate synthase">
    <location>
        <begin position="1"/>
        <end position="548"/>
    </location>
</feature>
<feature type="binding site" evidence="1">
    <location>
        <begin position="130"/>
        <end position="133"/>
    </location>
    <ligand>
        <name>ATP</name>
        <dbReference type="ChEBI" id="CHEBI:30616"/>
    </ligand>
</feature>
<feature type="binding site" evidence="1">
    <location>
        <position position="157"/>
    </location>
    <ligand>
        <name>Mg(2+)</name>
        <dbReference type="ChEBI" id="CHEBI:18420"/>
        <label>1</label>
    </ligand>
</feature>
<feature type="binding site" evidence="1">
    <location>
        <position position="234"/>
    </location>
    <ligand>
        <name>Mg(2+)</name>
        <dbReference type="ChEBI" id="CHEBI:18420"/>
        <label>1</label>
    </ligand>
</feature>
<feature type="binding site" evidence="1">
    <location>
        <position position="262"/>
    </location>
    <ligand>
        <name>Mg(2+)</name>
        <dbReference type="ChEBI" id="CHEBI:18420"/>
        <label>2</label>
    </ligand>
</feature>
<feature type="binding site" evidence="1">
    <location>
        <position position="382"/>
    </location>
    <ligand>
        <name>ATP</name>
        <dbReference type="ChEBI" id="CHEBI:30616"/>
    </ligand>
</feature>
<feature type="binding site" evidence="1">
    <location>
        <position position="396"/>
    </location>
    <ligand>
        <name>ATP</name>
        <dbReference type="ChEBI" id="CHEBI:30616"/>
    </ligand>
</feature>
<protein>
    <recommendedName>
        <fullName evidence="2">Folylpolyglutamate synthase</fullName>
        <ecNumber evidence="2">6.3.2.17</ecNumber>
    </recommendedName>
    <alternativeName>
        <fullName evidence="2">Folylpoly-gamma-glutamate synthetase</fullName>
        <shortName evidence="2">FPGS</shortName>
    </alternativeName>
    <alternativeName>
        <fullName evidence="2">Tetrahydrofolylpolyglutamate synthase</fullName>
        <shortName evidence="2">Tetrahydrofolate synthase</shortName>
    </alternativeName>
</protein>
<reference evidence="4" key="1">
    <citation type="journal article" date="2011" name="PLoS Genet.">
        <title>Whole-genome comparison reveals novel genetic elements that characterize the genome of industrial strains of Saccharomyces cerevisiae.</title>
        <authorList>
            <person name="Borneman A.R."/>
            <person name="Desany B.A."/>
            <person name="Riches D."/>
            <person name="Affourtit J.P."/>
            <person name="Forgan A.H."/>
            <person name="Pretorius I.S."/>
            <person name="Egholm M."/>
            <person name="Chambers P.J."/>
        </authorList>
    </citation>
    <scope>NUCLEOTIDE SEQUENCE [LARGE SCALE GENOMIC DNA]</scope>
    <source>
        <strain>AWRI796</strain>
    </source>
</reference>
<gene>
    <name evidence="2" type="primary">MET7</name>
    <name type="ORF">AWRI796_4613</name>
</gene>
<keyword id="KW-0067">ATP-binding</keyword>
<keyword id="KW-0963">Cytoplasm</keyword>
<keyword id="KW-0436">Ligase</keyword>
<keyword id="KW-0460">Magnesium</keyword>
<keyword id="KW-0472">Membrane</keyword>
<keyword id="KW-0479">Metal-binding</keyword>
<keyword id="KW-0496">Mitochondrion</keyword>
<keyword id="KW-0999">Mitochondrion inner membrane</keyword>
<keyword id="KW-0547">Nucleotide-binding</keyword>
<keyword id="KW-0554">One-carbon metabolism</keyword>
<evidence type="ECO:0000250" key="1">
    <source>
        <dbReference type="UniProtKB" id="P08192"/>
    </source>
</evidence>
<evidence type="ECO:0000250" key="2">
    <source>
        <dbReference type="UniProtKB" id="Q08645"/>
    </source>
</evidence>
<evidence type="ECO:0000305" key="3"/>
<evidence type="ECO:0000312" key="4">
    <source>
        <dbReference type="EMBL" id="EGA72972.1"/>
    </source>
</evidence>
<name>FOLE_YEASA</name>
<organism>
    <name type="scientific">Saccharomyces cerevisiae (strain AWRI796)</name>
    <name type="common">Baker's yeast</name>
    <dbReference type="NCBI Taxonomy" id="764097"/>
    <lineage>
        <taxon>Eukaryota</taxon>
        <taxon>Fungi</taxon>
        <taxon>Dikarya</taxon>
        <taxon>Ascomycota</taxon>
        <taxon>Saccharomycotina</taxon>
        <taxon>Saccharomycetes</taxon>
        <taxon>Saccharomycetales</taxon>
        <taxon>Saccharomycetaceae</taxon>
        <taxon>Saccharomyces</taxon>
    </lineage>
</organism>
<sequence length="548" mass="62121">MHKGKKNYPNLITSFRMNLKKIILNHDRFSHPERWKTNALLRFTFVYIKFLFDLMIIKNPLRMVGKTYRDAVTALNSLQSNYANIMAIRQTGDRKNTMTLLEMHEWSRRIGYSASDFNKLNIVHITGTKGKGSTAAFTSSILGQYKEQLPRIGLYTSPHLKSVRERIRINGEPISEEKFAKYFFEVWDRLDSTTSSLDKFPHMIPGSKPGYFKFLTLLSFHTFIQEDCKSCVYEVGVGGELDSTNIIEKPIVCGVTLLGIDHTFMLGDTIEEIAWNKGGIFKSGAPAFTVEKQPPQGLTILKERAEERKTTLTEVPPFKQLENVKLGIAGEFQKSNASLAVMLASEILHTSNILEEKIKCSSNASIPEKFIIGLQNTKWEGRCQVLEKGKNVWYIDGAHTKDSMVAASTWFRDTVRLSKRKKILLFNQQSRDANALVNNLYSSVSPEITFDDVIFTTNVTWKSGSYSADLVSMNTSQEDVEKLKVQESLVKNWNKIDDNRAKTHVTASIEEANELIETLYDEPADIFVTGSLHLVGGLLVVFDRIDVK</sequence>
<dbReference type="EC" id="6.3.2.17" evidence="2"/>
<dbReference type="EMBL" id="ADVS01000045">
    <property type="protein sequence ID" value="EGA72972.1"/>
    <property type="status" value="ALT_SEQ"/>
    <property type="molecule type" value="Genomic_DNA"/>
</dbReference>
<dbReference type="SMR" id="E7KIA3"/>
<dbReference type="HOGENOM" id="CLU_779814_0_0_1"/>
<dbReference type="OrthoDB" id="5212574at2759"/>
<dbReference type="UniPathway" id="UPA00850"/>
<dbReference type="GO" id="GO:0005829">
    <property type="term" value="C:cytosol"/>
    <property type="evidence" value="ECO:0007669"/>
    <property type="project" value="TreeGrafter"/>
</dbReference>
<dbReference type="GO" id="GO:0005743">
    <property type="term" value="C:mitochondrial inner membrane"/>
    <property type="evidence" value="ECO:0007669"/>
    <property type="project" value="UniProtKB-SubCell"/>
</dbReference>
<dbReference type="GO" id="GO:0005759">
    <property type="term" value="C:mitochondrial matrix"/>
    <property type="evidence" value="ECO:0007669"/>
    <property type="project" value="UniProtKB-SubCell"/>
</dbReference>
<dbReference type="GO" id="GO:0005524">
    <property type="term" value="F:ATP binding"/>
    <property type="evidence" value="ECO:0007669"/>
    <property type="project" value="UniProtKB-KW"/>
</dbReference>
<dbReference type="GO" id="GO:0046872">
    <property type="term" value="F:metal ion binding"/>
    <property type="evidence" value="ECO:0007669"/>
    <property type="project" value="UniProtKB-KW"/>
</dbReference>
<dbReference type="GO" id="GO:0004326">
    <property type="term" value="F:tetrahydrofolylpolyglutamate synthase activity"/>
    <property type="evidence" value="ECO:0007669"/>
    <property type="project" value="UniProtKB-EC"/>
</dbReference>
<dbReference type="GO" id="GO:0006730">
    <property type="term" value="P:one-carbon metabolic process"/>
    <property type="evidence" value="ECO:0007669"/>
    <property type="project" value="UniProtKB-KW"/>
</dbReference>
<dbReference type="FunFam" id="3.40.1190.10:FF:000009">
    <property type="entry name" value="Folylpolyglutamate synthase"/>
    <property type="match status" value="1"/>
</dbReference>
<dbReference type="FunFam" id="3.90.190.20:FF:000009">
    <property type="entry name" value="Folylpolyglutamate synthase"/>
    <property type="match status" value="1"/>
</dbReference>
<dbReference type="Gene3D" id="3.90.190.20">
    <property type="entry name" value="Mur ligase, C-terminal domain"/>
    <property type="match status" value="1"/>
</dbReference>
<dbReference type="Gene3D" id="3.40.1190.10">
    <property type="entry name" value="Mur-like, catalytic domain"/>
    <property type="match status" value="1"/>
</dbReference>
<dbReference type="InterPro" id="IPR001645">
    <property type="entry name" value="Folylpolyglutamate_synth"/>
</dbReference>
<dbReference type="InterPro" id="IPR018109">
    <property type="entry name" value="Folylpolyglutamate_synth_CS"/>
</dbReference>
<dbReference type="InterPro" id="IPR023600">
    <property type="entry name" value="Folylpolyglutamate_synth_euk"/>
</dbReference>
<dbReference type="InterPro" id="IPR036565">
    <property type="entry name" value="Mur-like_cat_sf"/>
</dbReference>
<dbReference type="InterPro" id="IPR036615">
    <property type="entry name" value="Mur_ligase_C_dom_sf"/>
</dbReference>
<dbReference type="NCBIfam" id="TIGR01499">
    <property type="entry name" value="folC"/>
    <property type="match status" value="1"/>
</dbReference>
<dbReference type="PANTHER" id="PTHR11136:SF5">
    <property type="entry name" value="FOLYLPOLYGLUTAMATE SYNTHASE, MITOCHONDRIAL"/>
    <property type="match status" value="1"/>
</dbReference>
<dbReference type="PANTHER" id="PTHR11136">
    <property type="entry name" value="FOLYLPOLYGLUTAMATE SYNTHASE-RELATED"/>
    <property type="match status" value="1"/>
</dbReference>
<dbReference type="PIRSF" id="PIRSF038895">
    <property type="entry name" value="FPGS"/>
    <property type="match status" value="1"/>
</dbReference>
<dbReference type="SUPFAM" id="SSF53623">
    <property type="entry name" value="MurD-like peptide ligases, catalytic domain"/>
    <property type="match status" value="1"/>
</dbReference>
<dbReference type="SUPFAM" id="SSF53244">
    <property type="entry name" value="MurD-like peptide ligases, peptide-binding domain"/>
    <property type="match status" value="1"/>
</dbReference>
<dbReference type="PROSITE" id="PS01011">
    <property type="entry name" value="FOLYLPOLYGLU_SYNT_1"/>
    <property type="match status" value="1"/>
</dbReference>
<dbReference type="PROSITE" id="PS01012">
    <property type="entry name" value="FOLYLPOLYGLU_SYNT_2"/>
    <property type="match status" value="1"/>
</dbReference>
<proteinExistence type="inferred from homology"/>
<accession>E7KIA3</accession>
<comment type="function">
    <text evidence="2">Catalyzes conversion of folates to polyglutamate derivatives allowing concentration of folate compounds in the cell and the intracellular retention of these cofactors, which are important substrates for most of the folate-dependent enzymes that are involved in one-carbon transfer reactions involved in purine, pyrimidine and amino acid synthesis. Required for methionine synthesis and maintenance of intact mitochondrial DNA. Involved in telomere maintenance (By similarity).</text>
</comment>
<comment type="catalytic activity">
    <reaction evidence="2">
        <text>(6S)-5,6,7,8-tetrahydrofolyl-(gamma-L-Glu)(n) + L-glutamate + ATP = (6S)-5,6,7,8-tetrahydrofolyl-(gamma-L-Glu)(n+1) + ADP + phosphate + H(+)</text>
        <dbReference type="Rhea" id="RHEA:10580"/>
        <dbReference type="Rhea" id="RHEA-COMP:14738"/>
        <dbReference type="Rhea" id="RHEA-COMP:14740"/>
        <dbReference type="ChEBI" id="CHEBI:15378"/>
        <dbReference type="ChEBI" id="CHEBI:29985"/>
        <dbReference type="ChEBI" id="CHEBI:30616"/>
        <dbReference type="ChEBI" id="CHEBI:43474"/>
        <dbReference type="ChEBI" id="CHEBI:141005"/>
        <dbReference type="ChEBI" id="CHEBI:456216"/>
        <dbReference type="EC" id="6.3.2.17"/>
    </reaction>
</comment>
<comment type="cofactor">
    <cofactor evidence="2">
        <name>a monovalent cation</name>
        <dbReference type="ChEBI" id="CHEBI:60242"/>
    </cofactor>
    <text evidence="2">A monovalent cation.</text>
</comment>
<comment type="pathway">
    <text evidence="2">Cofactor biosynthesis; tetrahydrofolylpolyglutamate biosynthesis.</text>
</comment>
<comment type="subcellular location">
    <subcellularLocation>
        <location evidence="2">Mitochondrion inner membrane</location>
    </subcellularLocation>
    <subcellularLocation>
        <location evidence="2">Mitochondrion matrix</location>
    </subcellularLocation>
    <subcellularLocation>
        <location evidence="2">Cytoplasm</location>
    </subcellularLocation>
</comment>
<comment type="similarity">
    <text evidence="2">Belongs to the folylpolyglutamate synthase family.</text>
</comment>
<comment type="sequence caution" evidence="3">
    <conflict type="erroneous initiation">
        <sequence resource="EMBL-CDS" id="EGA72972"/>
    </conflict>
    <text>Truncated N-terminus.</text>
</comment>
<comment type="sequence caution" evidence="3">
    <conflict type="frameshift">
        <sequence resource="EMBL-CDS" id="EGA72972"/>
    </conflict>
</comment>